<feature type="chain" id="PRO_0000104157" description="Protein translocase subunit SecE">
    <location>
        <begin position="1"/>
        <end position="59"/>
    </location>
</feature>
<feature type="transmembrane region" description="Helical" evidence="1">
    <location>
        <begin position="30"/>
        <end position="50"/>
    </location>
</feature>
<name>SECE_BACLI</name>
<protein>
    <recommendedName>
        <fullName evidence="1">Protein translocase subunit SecE</fullName>
    </recommendedName>
</protein>
<sequence>MGIIKFLKNVGKEMKKVTWPKGKELTRYTITVITTVIFFAIFFALIDSGITQLIRLIVE</sequence>
<keyword id="KW-1003">Cell membrane</keyword>
<keyword id="KW-0472">Membrane</keyword>
<keyword id="KW-0653">Protein transport</keyword>
<keyword id="KW-0811">Translocation</keyword>
<keyword id="KW-0812">Transmembrane</keyword>
<keyword id="KW-1133">Transmembrane helix</keyword>
<keyword id="KW-0813">Transport</keyword>
<evidence type="ECO:0000255" key="1">
    <source>
        <dbReference type="HAMAP-Rule" id="MF_00422"/>
    </source>
</evidence>
<comment type="function">
    <text evidence="1">Essential subunit of the Sec protein translocation channel SecYEG. Clamps together the 2 halves of SecY. May contact the channel plug during translocation.</text>
</comment>
<comment type="subunit">
    <text evidence="1">Component of the Sec protein translocase complex. Heterotrimer consisting of SecY, SecE and SecG subunits. The heterotrimers can form oligomers, although 1 heterotrimer is thought to be able to translocate proteins. Interacts with the ribosome. Interacts with SecDF, and other proteins may be involved. Interacts with SecA.</text>
</comment>
<comment type="subcellular location">
    <subcellularLocation>
        <location evidence="1">Cell membrane</location>
        <topology evidence="1">Single-pass membrane protein</topology>
    </subcellularLocation>
</comment>
<comment type="similarity">
    <text evidence="1">Belongs to the SecE/SEC61-gamma family.</text>
</comment>
<proteinExistence type="inferred from homology"/>
<accession>P38381</accession>
<organism>
    <name type="scientific">Bacillus licheniformis</name>
    <dbReference type="NCBI Taxonomy" id="1402"/>
    <lineage>
        <taxon>Bacteria</taxon>
        <taxon>Bacillati</taxon>
        <taxon>Bacillota</taxon>
        <taxon>Bacilli</taxon>
        <taxon>Bacillales</taxon>
        <taxon>Bacillaceae</taxon>
        <taxon>Bacillus</taxon>
    </lineage>
</organism>
<dbReference type="EMBL" id="M29694">
    <property type="status" value="NOT_ANNOTATED_CDS"/>
    <property type="molecule type" value="Genomic_DNA"/>
</dbReference>
<dbReference type="RefSeq" id="WP_003178291.1">
    <property type="nucleotide sequence ID" value="NZ_VEGU01000020.1"/>
</dbReference>
<dbReference type="SMR" id="P38381"/>
<dbReference type="GeneID" id="92858918"/>
<dbReference type="PATRIC" id="fig|1402.62.peg.2012"/>
<dbReference type="OMA" id="WAFDIGV"/>
<dbReference type="GO" id="GO:0005886">
    <property type="term" value="C:plasma membrane"/>
    <property type="evidence" value="ECO:0007669"/>
    <property type="project" value="UniProtKB-SubCell"/>
</dbReference>
<dbReference type="GO" id="GO:0008320">
    <property type="term" value="F:protein transmembrane transporter activity"/>
    <property type="evidence" value="ECO:0007669"/>
    <property type="project" value="UniProtKB-UniRule"/>
</dbReference>
<dbReference type="GO" id="GO:0065002">
    <property type="term" value="P:intracellular protein transmembrane transport"/>
    <property type="evidence" value="ECO:0007669"/>
    <property type="project" value="UniProtKB-UniRule"/>
</dbReference>
<dbReference type="GO" id="GO:0009306">
    <property type="term" value="P:protein secretion"/>
    <property type="evidence" value="ECO:0007669"/>
    <property type="project" value="UniProtKB-UniRule"/>
</dbReference>
<dbReference type="GO" id="GO:0006605">
    <property type="term" value="P:protein targeting"/>
    <property type="evidence" value="ECO:0007669"/>
    <property type="project" value="UniProtKB-UniRule"/>
</dbReference>
<dbReference type="GO" id="GO:0043952">
    <property type="term" value="P:protein transport by the Sec complex"/>
    <property type="evidence" value="ECO:0007669"/>
    <property type="project" value="UniProtKB-UniRule"/>
</dbReference>
<dbReference type="Gene3D" id="1.20.5.1030">
    <property type="entry name" value="Preprotein translocase secy subunit"/>
    <property type="match status" value="1"/>
</dbReference>
<dbReference type="HAMAP" id="MF_00422">
    <property type="entry name" value="SecE"/>
    <property type="match status" value="1"/>
</dbReference>
<dbReference type="InterPro" id="IPR005807">
    <property type="entry name" value="SecE_bac"/>
</dbReference>
<dbReference type="InterPro" id="IPR038379">
    <property type="entry name" value="SecE_sf"/>
</dbReference>
<dbReference type="InterPro" id="IPR001901">
    <property type="entry name" value="Translocase_SecE/Sec61-g"/>
</dbReference>
<dbReference type="NCBIfam" id="TIGR00964">
    <property type="entry name" value="secE_bact"/>
    <property type="match status" value="1"/>
</dbReference>
<dbReference type="PANTHER" id="PTHR33910">
    <property type="entry name" value="PROTEIN TRANSLOCASE SUBUNIT SECE"/>
    <property type="match status" value="1"/>
</dbReference>
<dbReference type="PANTHER" id="PTHR33910:SF1">
    <property type="entry name" value="PROTEIN TRANSLOCASE SUBUNIT SECE"/>
    <property type="match status" value="1"/>
</dbReference>
<dbReference type="Pfam" id="PF00584">
    <property type="entry name" value="SecE"/>
    <property type="match status" value="1"/>
</dbReference>
<dbReference type="PROSITE" id="PS01067">
    <property type="entry name" value="SECE_SEC61G"/>
    <property type="match status" value="1"/>
</dbReference>
<reference key="1">
    <citation type="journal article" date="1988" name="J. Bacteriol.">
        <title>Bacillus sporulation gene spo0H codes for sigma 30 (sigma H).</title>
        <authorList>
            <person name="Dubnau E."/>
            <person name="Weir J."/>
            <person name="Nair G."/>
            <person name="Carter L. III"/>
            <person name="Moran C.P. Jr."/>
            <person name="Smith I."/>
        </authorList>
    </citation>
    <scope>NUCLEOTIDE SEQUENCE [GENOMIC DNA]</scope>
</reference>
<gene>
    <name evidence="1" type="primary">secE</name>
</gene>